<name>RNZ_LISMO</name>
<protein>
    <recommendedName>
        <fullName evidence="1">Ribonuclease Z</fullName>
        <shortName evidence="1">RNase Z</shortName>
        <ecNumber evidence="1">3.1.26.11</ecNumber>
    </recommendedName>
    <alternativeName>
        <fullName evidence="1">tRNA 3 endonuclease</fullName>
    </alternativeName>
    <alternativeName>
        <fullName evidence="1">tRNase Z</fullName>
    </alternativeName>
</protein>
<accession>Q8Y5S8</accession>
<sequence>MELVFLGTGAGVPSRGRNVTSIALSMLNERNTIWLFDCGEATQHQIMRSQIKLSKLEKIFITHMHGDHIFGLPGLLSSRSFQGGDSNLTIYGPAGIAEYVETSLRLSGTRLTYKINFEEIEPGVIFEDKMFIVTADDLDHGVRSFGYRIVEKDKQGALNAEKLKADGVEAGPVFQKLKNGEIVTLADGRVIDGKNYIGEPQKGKIISIFGDTRETSSELELALNADILVHEATFEGDKAKMAGEYMHSTTLQAAKLAKTANVKKLILTHISSRYDRDASKELLIEAKTIFENTEIAYDLAVFQVGE</sequence>
<evidence type="ECO:0000255" key="1">
    <source>
        <dbReference type="HAMAP-Rule" id="MF_01818"/>
    </source>
</evidence>
<gene>
    <name evidence="1" type="primary">rnz</name>
    <name type="ordered locus">lmo1977</name>
</gene>
<feature type="chain" id="PRO_0000155875" description="Ribonuclease Z">
    <location>
        <begin position="1"/>
        <end position="306"/>
    </location>
</feature>
<feature type="active site" description="Proton acceptor" evidence="1">
    <location>
        <position position="67"/>
    </location>
</feature>
<feature type="binding site" evidence="1">
    <location>
        <position position="63"/>
    </location>
    <ligand>
        <name>Zn(2+)</name>
        <dbReference type="ChEBI" id="CHEBI:29105"/>
        <label>1</label>
        <note>catalytic</note>
    </ligand>
</feature>
<feature type="binding site" evidence="1">
    <location>
        <position position="65"/>
    </location>
    <ligand>
        <name>Zn(2+)</name>
        <dbReference type="ChEBI" id="CHEBI:29105"/>
        <label>1</label>
        <note>catalytic</note>
    </ligand>
</feature>
<feature type="binding site" evidence="1">
    <location>
        <position position="67"/>
    </location>
    <ligand>
        <name>Zn(2+)</name>
        <dbReference type="ChEBI" id="CHEBI:29105"/>
        <label>2</label>
        <note>catalytic</note>
    </ligand>
</feature>
<feature type="binding site" evidence="1">
    <location>
        <position position="68"/>
    </location>
    <ligand>
        <name>Zn(2+)</name>
        <dbReference type="ChEBI" id="CHEBI:29105"/>
        <label>2</label>
        <note>catalytic</note>
    </ligand>
</feature>
<feature type="binding site" evidence="1">
    <location>
        <position position="140"/>
    </location>
    <ligand>
        <name>Zn(2+)</name>
        <dbReference type="ChEBI" id="CHEBI:29105"/>
        <label>1</label>
        <note>catalytic</note>
    </ligand>
</feature>
<feature type="binding site" evidence="1">
    <location>
        <position position="211"/>
    </location>
    <ligand>
        <name>Zn(2+)</name>
        <dbReference type="ChEBI" id="CHEBI:29105"/>
        <label>1</label>
        <note>catalytic</note>
    </ligand>
</feature>
<feature type="binding site" evidence="1">
    <location>
        <position position="211"/>
    </location>
    <ligand>
        <name>Zn(2+)</name>
        <dbReference type="ChEBI" id="CHEBI:29105"/>
        <label>2</label>
        <note>catalytic</note>
    </ligand>
</feature>
<feature type="binding site" evidence="1">
    <location>
        <position position="269"/>
    </location>
    <ligand>
        <name>Zn(2+)</name>
        <dbReference type="ChEBI" id="CHEBI:29105"/>
        <label>2</label>
        <note>catalytic</note>
    </ligand>
</feature>
<reference key="1">
    <citation type="journal article" date="2001" name="Science">
        <title>Comparative genomics of Listeria species.</title>
        <authorList>
            <person name="Glaser P."/>
            <person name="Frangeul L."/>
            <person name="Buchrieser C."/>
            <person name="Rusniok C."/>
            <person name="Amend A."/>
            <person name="Baquero F."/>
            <person name="Berche P."/>
            <person name="Bloecker H."/>
            <person name="Brandt P."/>
            <person name="Chakraborty T."/>
            <person name="Charbit A."/>
            <person name="Chetouani F."/>
            <person name="Couve E."/>
            <person name="de Daruvar A."/>
            <person name="Dehoux P."/>
            <person name="Domann E."/>
            <person name="Dominguez-Bernal G."/>
            <person name="Duchaud E."/>
            <person name="Durant L."/>
            <person name="Dussurget O."/>
            <person name="Entian K.-D."/>
            <person name="Fsihi H."/>
            <person name="Garcia-del Portillo F."/>
            <person name="Garrido P."/>
            <person name="Gautier L."/>
            <person name="Goebel W."/>
            <person name="Gomez-Lopez N."/>
            <person name="Hain T."/>
            <person name="Hauf J."/>
            <person name="Jackson D."/>
            <person name="Jones L.-M."/>
            <person name="Kaerst U."/>
            <person name="Kreft J."/>
            <person name="Kuhn M."/>
            <person name="Kunst F."/>
            <person name="Kurapkat G."/>
            <person name="Madueno E."/>
            <person name="Maitournam A."/>
            <person name="Mata Vicente J."/>
            <person name="Ng E."/>
            <person name="Nedjari H."/>
            <person name="Nordsiek G."/>
            <person name="Novella S."/>
            <person name="de Pablos B."/>
            <person name="Perez-Diaz J.-C."/>
            <person name="Purcell R."/>
            <person name="Remmel B."/>
            <person name="Rose M."/>
            <person name="Schlueter T."/>
            <person name="Simoes N."/>
            <person name="Tierrez A."/>
            <person name="Vazquez-Boland J.-A."/>
            <person name="Voss H."/>
            <person name="Wehland J."/>
            <person name="Cossart P."/>
        </authorList>
    </citation>
    <scope>NUCLEOTIDE SEQUENCE [LARGE SCALE GENOMIC DNA]</scope>
    <source>
        <strain>ATCC BAA-679 / EGD-e</strain>
    </source>
</reference>
<dbReference type="EC" id="3.1.26.11" evidence="1"/>
<dbReference type="EMBL" id="AL591981">
    <property type="protein sequence ID" value="CAD00055.1"/>
    <property type="molecule type" value="Genomic_DNA"/>
</dbReference>
<dbReference type="PIR" id="AI1321">
    <property type="entry name" value="AI1321"/>
</dbReference>
<dbReference type="RefSeq" id="NP_465501.1">
    <property type="nucleotide sequence ID" value="NC_003210.1"/>
</dbReference>
<dbReference type="RefSeq" id="WP_010989857.1">
    <property type="nucleotide sequence ID" value="NZ_CP149495.1"/>
</dbReference>
<dbReference type="SMR" id="Q8Y5S8"/>
<dbReference type="STRING" id="169963.gene:17594662"/>
<dbReference type="PaxDb" id="169963-lmo1977"/>
<dbReference type="EnsemblBacteria" id="CAD00055">
    <property type="protein sequence ID" value="CAD00055"/>
    <property type="gene ID" value="CAD00055"/>
</dbReference>
<dbReference type="GeneID" id="984866"/>
<dbReference type="KEGG" id="lmo:lmo1977"/>
<dbReference type="PATRIC" id="fig|169963.11.peg.2024"/>
<dbReference type="eggNOG" id="COG1234">
    <property type="taxonomic scope" value="Bacteria"/>
</dbReference>
<dbReference type="HOGENOM" id="CLU_031317_2_0_9"/>
<dbReference type="OrthoDB" id="9800940at2"/>
<dbReference type="PhylomeDB" id="Q8Y5S8"/>
<dbReference type="BioCyc" id="LMON169963:LMO1977-MONOMER"/>
<dbReference type="Proteomes" id="UP000000817">
    <property type="component" value="Chromosome"/>
</dbReference>
<dbReference type="GO" id="GO:0042781">
    <property type="term" value="F:3'-tRNA processing endoribonuclease activity"/>
    <property type="evidence" value="ECO:0000318"/>
    <property type="project" value="GO_Central"/>
</dbReference>
<dbReference type="GO" id="GO:0008270">
    <property type="term" value="F:zinc ion binding"/>
    <property type="evidence" value="ECO:0007669"/>
    <property type="project" value="UniProtKB-UniRule"/>
</dbReference>
<dbReference type="CDD" id="cd07717">
    <property type="entry name" value="RNaseZ_ZiPD-like_MBL-fold"/>
    <property type="match status" value="1"/>
</dbReference>
<dbReference type="FunFam" id="3.60.15.10:FF:000002">
    <property type="entry name" value="Ribonuclease Z"/>
    <property type="match status" value="1"/>
</dbReference>
<dbReference type="Gene3D" id="3.60.15.10">
    <property type="entry name" value="Ribonuclease Z/Hydroxyacylglutathione hydrolase-like"/>
    <property type="match status" value="1"/>
</dbReference>
<dbReference type="HAMAP" id="MF_01818">
    <property type="entry name" value="RNase_Z_BN"/>
    <property type="match status" value="1"/>
</dbReference>
<dbReference type="InterPro" id="IPR001279">
    <property type="entry name" value="Metallo-B-lactamas"/>
</dbReference>
<dbReference type="InterPro" id="IPR036866">
    <property type="entry name" value="RibonucZ/Hydroxyglut_hydro"/>
</dbReference>
<dbReference type="InterPro" id="IPR013471">
    <property type="entry name" value="RNase_Z/BN"/>
</dbReference>
<dbReference type="NCBIfam" id="NF000800">
    <property type="entry name" value="PRK00055.1-1"/>
    <property type="match status" value="1"/>
</dbReference>
<dbReference type="NCBIfam" id="NF000801">
    <property type="entry name" value="PRK00055.1-3"/>
    <property type="match status" value="1"/>
</dbReference>
<dbReference type="NCBIfam" id="TIGR02651">
    <property type="entry name" value="RNase_Z"/>
    <property type="match status" value="1"/>
</dbReference>
<dbReference type="PANTHER" id="PTHR46018">
    <property type="entry name" value="ZINC PHOSPHODIESTERASE ELAC PROTEIN 1"/>
    <property type="match status" value="1"/>
</dbReference>
<dbReference type="PANTHER" id="PTHR46018:SF2">
    <property type="entry name" value="ZINC PHOSPHODIESTERASE ELAC PROTEIN 1"/>
    <property type="match status" value="1"/>
</dbReference>
<dbReference type="Pfam" id="PF12706">
    <property type="entry name" value="Lactamase_B_2"/>
    <property type="match status" value="1"/>
</dbReference>
<dbReference type="SMART" id="SM00849">
    <property type="entry name" value="Lactamase_B"/>
    <property type="match status" value="1"/>
</dbReference>
<dbReference type="SUPFAM" id="SSF56281">
    <property type="entry name" value="Metallo-hydrolase/oxidoreductase"/>
    <property type="match status" value="1"/>
</dbReference>
<keyword id="KW-0255">Endonuclease</keyword>
<keyword id="KW-0378">Hydrolase</keyword>
<keyword id="KW-0479">Metal-binding</keyword>
<keyword id="KW-0540">Nuclease</keyword>
<keyword id="KW-1185">Reference proteome</keyword>
<keyword id="KW-0819">tRNA processing</keyword>
<keyword id="KW-0862">Zinc</keyword>
<proteinExistence type="inferred from homology"/>
<comment type="function">
    <text evidence="1">Zinc phosphodiesterase, which displays some tRNA 3'-processing endonuclease activity. Probably involved in tRNA maturation, by removing a 3'-trailer from precursor tRNA.</text>
</comment>
<comment type="catalytic activity">
    <reaction evidence="1">
        <text>Endonucleolytic cleavage of RNA, removing extra 3' nucleotides from tRNA precursor, generating 3' termini of tRNAs. A 3'-hydroxy group is left at the tRNA terminus and a 5'-phosphoryl group is left at the trailer molecule.</text>
        <dbReference type="EC" id="3.1.26.11"/>
    </reaction>
</comment>
<comment type="cofactor">
    <cofactor evidence="1">
        <name>Zn(2+)</name>
        <dbReference type="ChEBI" id="CHEBI:29105"/>
    </cofactor>
    <text evidence="1">Binds 2 Zn(2+) ions.</text>
</comment>
<comment type="subunit">
    <text evidence="1">Homodimer.</text>
</comment>
<comment type="similarity">
    <text evidence="1">Belongs to the RNase Z family.</text>
</comment>
<organism>
    <name type="scientific">Listeria monocytogenes serovar 1/2a (strain ATCC BAA-679 / EGD-e)</name>
    <dbReference type="NCBI Taxonomy" id="169963"/>
    <lineage>
        <taxon>Bacteria</taxon>
        <taxon>Bacillati</taxon>
        <taxon>Bacillota</taxon>
        <taxon>Bacilli</taxon>
        <taxon>Bacillales</taxon>
        <taxon>Listeriaceae</taxon>
        <taxon>Listeria</taxon>
    </lineage>
</organism>